<keyword id="KW-0963">Cytoplasm</keyword>
<keyword id="KW-0413">Isomerase</keyword>
<keyword id="KW-0464">Manganese</keyword>
<keyword id="KW-0479">Metal-binding</keyword>
<sequence>MKKYNRIFTIVIDSLGIGGMPDSMEYGDKNVDTLGHIAESVEKFNIPNLEKLGIANLHPIKHVKEANKPLAHYMKMKEASVGKDTMTGHWEMMGLHITKPFQTFTDTGFPQELLDELTKRTGHNIVGNKSSSGTEILDELGEHQMETGDMIVYTSADSVLQICGHEETFGLDELYRCCEIARELTLKDEWKVGRVIARPYLGAKKGEFKRTSNRHDYALKPYGSTALNALKDNGFDVISVGKISDIFDGEGITESNKSKSSVHGMEQTLEIMDRDFKGLCFVNLVDFDALWGHRRNPVGYAEEIEKFDVNLGKVLEKLKEDDLLIITADHGNDPTYVGSDHTREFVPFIAYSPSMKENGLMDTVDSFATIGATIADNFELSMPENTIGKSVLEKLV</sequence>
<protein>
    <recommendedName>
        <fullName evidence="1">Phosphopentomutase</fullName>
        <ecNumber evidence="1">5.4.2.7</ecNumber>
    </recommendedName>
    <alternativeName>
        <fullName evidence="1">Phosphodeoxyribomutase</fullName>
    </alternativeName>
</protein>
<dbReference type="EC" id="5.4.2.7" evidence="1"/>
<dbReference type="EMBL" id="CP001078">
    <property type="protein sequence ID" value="ACD51781.1"/>
    <property type="molecule type" value="Genomic_DNA"/>
</dbReference>
<dbReference type="RefSeq" id="WP_012450068.1">
    <property type="nucleotide sequence ID" value="NC_010723.1"/>
</dbReference>
<dbReference type="SMR" id="B2V0J5"/>
<dbReference type="KEGG" id="cbt:CLH_1495"/>
<dbReference type="HOGENOM" id="CLU_053861_0_0_9"/>
<dbReference type="UniPathway" id="UPA00002">
    <property type="reaction ID" value="UER00467"/>
</dbReference>
<dbReference type="GO" id="GO:0005829">
    <property type="term" value="C:cytosol"/>
    <property type="evidence" value="ECO:0007669"/>
    <property type="project" value="TreeGrafter"/>
</dbReference>
<dbReference type="GO" id="GO:0000287">
    <property type="term" value="F:magnesium ion binding"/>
    <property type="evidence" value="ECO:0007669"/>
    <property type="project" value="InterPro"/>
</dbReference>
<dbReference type="GO" id="GO:0030145">
    <property type="term" value="F:manganese ion binding"/>
    <property type="evidence" value="ECO:0007669"/>
    <property type="project" value="UniProtKB-UniRule"/>
</dbReference>
<dbReference type="GO" id="GO:0008973">
    <property type="term" value="F:phosphopentomutase activity"/>
    <property type="evidence" value="ECO:0007669"/>
    <property type="project" value="UniProtKB-UniRule"/>
</dbReference>
<dbReference type="GO" id="GO:0006018">
    <property type="term" value="P:2-deoxyribose 1-phosphate catabolic process"/>
    <property type="evidence" value="ECO:0007669"/>
    <property type="project" value="UniProtKB-UniRule"/>
</dbReference>
<dbReference type="GO" id="GO:0006015">
    <property type="term" value="P:5-phosphoribose 1-diphosphate biosynthetic process"/>
    <property type="evidence" value="ECO:0007669"/>
    <property type="project" value="UniProtKB-UniPathway"/>
</dbReference>
<dbReference type="GO" id="GO:0043094">
    <property type="term" value="P:metabolic compound salvage"/>
    <property type="evidence" value="ECO:0007669"/>
    <property type="project" value="InterPro"/>
</dbReference>
<dbReference type="GO" id="GO:0009117">
    <property type="term" value="P:nucleotide metabolic process"/>
    <property type="evidence" value="ECO:0007669"/>
    <property type="project" value="InterPro"/>
</dbReference>
<dbReference type="CDD" id="cd16009">
    <property type="entry name" value="PPM"/>
    <property type="match status" value="1"/>
</dbReference>
<dbReference type="FunFam" id="3.30.70.1250:FF:000001">
    <property type="entry name" value="Phosphopentomutase"/>
    <property type="match status" value="1"/>
</dbReference>
<dbReference type="Gene3D" id="3.40.720.10">
    <property type="entry name" value="Alkaline Phosphatase, subunit A"/>
    <property type="match status" value="1"/>
</dbReference>
<dbReference type="Gene3D" id="3.30.70.1250">
    <property type="entry name" value="Phosphopentomutase"/>
    <property type="match status" value="1"/>
</dbReference>
<dbReference type="HAMAP" id="MF_00740">
    <property type="entry name" value="Phosphopentomut"/>
    <property type="match status" value="1"/>
</dbReference>
<dbReference type="InterPro" id="IPR017850">
    <property type="entry name" value="Alkaline_phosphatase_core_sf"/>
</dbReference>
<dbReference type="InterPro" id="IPR010045">
    <property type="entry name" value="DeoB"/>
</dbReference>
<dbReference type="InterPro" id="IPR006124">
    <property type="entry name" value="Metalloenzyme"/>
</dbReference>
<dbReference type="InterPro" id="IPR024052">
    <property type="entry name" value="Phosphopentomutase_DeoB_cap_sf"/>
</dbReference>
<dbReference type="NCBIfam" id="TIGR01696">
    <property type="entry name" value="deoB"/>
    <property type="match status" value="1"/>
</dbReference>
<dbReference type="NCBIfam" id="NF003766">
    <property type="entry name" value="PRK05362.1"/>
    <property type="match status" value="1"/>
</dbReference>
<dbReference type="PANTHER" id="PTHR21110">
    <property type="entry name" value="PHOSPHOPENTOMUTASE"/>
    <property type="match status" value="1"/>
</dbReference>
<dbReference type="PANTHER" id="PTHR21110:SF0">
    <property type="entry name" value="PHOSPHOPENTOMUTASE"/>
    <property type="match status" value="1"/>
</dbReference>
<dbReference type="Pfam" id="PF01676">
    <property type="entry name" value="Metalloenzyme"/>
    <property type="match status" value="1"/>
</dbReference>
<dbReference type="PIRSF" id="PIRSF001491">
    <property type="entry name" value="Ppentomutase"/>
    <property type="match status" value="1"/>
</dbReference>
<dbReference type="SUPFAM" id="SSF53649">
    <property type="entry name" value="Alkaline phosphatase-like"/>
    <property type="match status" value="1"/>
</dbReference>
<dbReference type="SUPFAM" id="SSF143856">
    <property type="entry name" value="DeoB insert domain-like"/>
    <property type="match status" value="1"/>
</dbReference>
<proteinExistence type="inferred from homology"/>
<accession>B2V0J5</accession>
<reference key="1">
    <citation type="submission" date="2008-05" db="EMBL/GenBank/DDBJ databases">
        <title>Complete genome sequence of Clostridium botulinum E3 str. Alaska E43.</title>
        <authorList>
            <person name="Brinkac L.M."/>
            <person name="Brown J.L."/>
            <person name="Bruce D."/>
            <person name="Detter C."/>
            <person name="Munk C."/>
            <person name="Smith L.A."/>
            <person name="Smith T.J."/>
            <person name="Sutton G."/>
            <person name="Brettin T.S."/>
        </authorList>
    </citation>
    <scope>NUCLEOTIDE SEQUENCE [LARGE SCALE GENOMIC DNA]</scope>
    <source>
        <strain>Alaska E43 / Type E3</strain>
    </source>
</reference>
<organism>
    <name type="scientific">Clostridium botulinum (strain Alaska E43 / Type E3)</name>
    <dbReference type="NCBI Taxonomy" id="508767"/>
    <lineage>
        <taxon>Bacteria</taxon>
        <taxon>Bacillati</taxon>
        <taxon>Bacillota</taxon>
        <taxon>Clostridia</taxon>
        <taxon>Eubacteriales</taxon>
        <taxon>Clostridiaceae</taxon>
        <taxon>Clostridium</taxon>
    </lineage>
</organism>
<name>DEOB_CLOBA</name>
<gene>
    <name evidence="1" type="primary">deoB</name>
    <name type="ordered locus">CLH_1495</name>
</gene>
<comment type="function">
    <text evidence="1">Isomerase that catalyzes the conversion of deoxy-ribose 1-phosphate (dRib-1-P) and ribose 1-phosphate (Rib-1-P) to deoxy-ribose 5-phosphate (dRib-5-P) and ribose 5-phosphate (Rib-5-P), respectively.</text>
</comment>
<comment type="catalytic activity">
    <reaction evidence="1">
        <text>2-deoxy-alpha-D-ribose 1-phosphate = 2-deoxy-D-ribose 5-phosphate</text>
        <dbReference type="Rhea" id="RHEA:27658"/>
        <dbReference type="ChEBI" id="CHEBI:57259"/>
        <dbReference type="ChEBI" id="CHEBI:62877"/>
        <dbReference type="EC" id="5.4.2.7"/>
    </reaction>
</comment>
<comment type="catalytic activity">
    <reaction evidence="1">
        <text>alpha-D-ribose 1-phosphate = D-ribose 5-phosphate</text>
        <dbReference type="Rhea" id="RHEA:18793"/>
        <dbReference type="ChEBI" id="CHEBI:57720"/>
        <dbReference type="ChEBI" id="CHEBI:78346"/>
        <dbReference type="EC" id="5.4.2.7"/>
    </reaction>
</comment>
<comment type="cofactor">
    <cofactor evidence="1">
        <name>Mn(2+)</name>
        <dbReference type="ChEBI" id="CHEBI:29035"/>
    </cofactor>
    <text evidence="1">Binds 2 manganese ions.</text>
</comment>
<comment type="pathway">
    <text evidence="1">Carbohydrate degradation; 2-deoxy-D-ribose 1-phosphate degradation; D-glyceraldehyde 3-phosphate and acetaldehyde from 2-deoxy-alpha-D-ribose 1-phosphate: step 1/2.</text>
</comment>
<comment type="subcellular location">
    <subcellularLocation>
        <location evidence="1">Cytoplasm</location>
    </subcellularLocation>
</comment>
<comment type="similarity">
    <text evidence="1">Belongs to the phosphopentomutase family.</text>
</comment>
<evidence type="ECO:0000255" key="1">
    <source>
        <dbReference type="HAMAP-Rule" id="MF_00740"/>
    </source>
</evidence>
<feature type="chain" id="PRO_1000133064" description="Phosphopentomutase">
    <location>
        <begin position="1"/>
        <end position="396"/>
    </location>
</feature>
<feature type="binding site" evidence="1">
    <location>
        <position position="13"/>
    </location>
    <ligand>
        <name>Mn(2+)</name>
        <dbReference type="ChEBI" id="CHEBI:29035"/>
        <label>1</label>
    </ligand>
</feature>
<feature type="binding site" evidence="1">
    <location>
        <position position="288"/>
    </location>
    <ligand>
        <name>Mn(2+)</name>
        <dbReference type="ChEBI" id="CHEBI:29035"/>
        <label>2</label>
    </ligand>
</feature>
<feature type="binding site" evidence="1">
    <location>
        <position position="293"/>
    </location>
    <ligand>
        <name>Mn(2+)</name>
        <dbReference type="ChEBI" id="CHEBI:29035"/>
        <label>2</label>
    </ligand>
</feature>
<feature type="binding site" evidence="1">
    <location>
        <position position="329"/>
    </location>
    <ligand>
        <name>Mn(2+)</name>
        <dbReference type="ChEBI" id="CHEBI:29035"/>
        <label>1</label>
    </ligand>
</feature>
<feature type="binding site" evidence="1">
    <location>
        <position position="330"/>
    </location>
    <ligand>
        <name>Mn(2+)</name>
        <dbReference type="ChEBI" id="CHEBI:29035"/>
        <label>1</label>
    </ligand>
</feature>
<feature type="binding site" evidence="1">
    <location>
        <position position="341"/>
    </location>
    <ligand>
        <name>Mn(2+)</name>
        <dbReference type="ChEBI" id="CHEBI:29035"/>
        <label>2</label>
    </ligand>
</feature>